<dbReference type="EC" id="2.3.1.-"/>
<dbReference type="EMBL" id="BC056305">
    <property type="protein sequence ID" value="AAH56305.1"/>
    <property type="molecule type" value="mRNA"/>
</dbReference>
<dbReference type="RefSeq" id="NP_956831.1">
    <property type="nucleotide sequence ID" value="NM_200537.1"/>
</dbReference>
<dbReference type="SMR" id="Q7SZQ0"/>
<dbReference type="FunCoup" id="Q7SZQ0">
    <property type="interactions" value="1524"/>
</dbReference>
<dbReference type="STRING" id="7955.ENSDARP00000047569"/>
<dbReference type="GlyCosmos" id="Q7SZQ0">
    <property type="glycosylation" value="1 site, No reported glycans"/>
</dbReference>
<dbReference type="PaxDb" id="7955-ENSDARP00000106817"/>
<dbReference type="GeneID" id="393509"/>
<dbReference type="KEGG" id="dre:393509"/>
<dbReference type="AGR" id="ZFIN:ZDB-GENE-040426-1516"/>
<dbReference type="CTD" id="79143"/>
<dbReference type="ZFIN" id="ZDB-GENE-040426-1516">
    <property type="gene designation" value="mboat7"/>
</dbReference>
<dbReference type="eggNOG" id="KOG2706">
    <property type="taxonomic scope" value="Eukaryota"/>
</dbReference>
<dbReference type="InParanoid" id="Q7SZQ0"/>
<dbReference type="OrthoDB" id="7663182at2759"/>
<dbReference type="PhylomeDB" id="Q7SZQ0"/>
<dbReference type="Reactome" id="R-DRE-1482922">
    <property type="pathway name" value="Acyl chain remodelling of PI"/>
</dbReference>
<dbReference type="UniPathway" id="UPA00085"/>
<dbReference type="PRO" id="PR:Q7SZQ0"/>
<dbReference type="Proteomes" id="UP000000437">
    <property type="component" value="Chromosome 16"/>
</dbReference>
<dbReference type="GO" id="GO:0005789">
    <property type="term" value="C:endoplasmic reticulum membrane"/>
    <property type="evidence" value="ECO:0007669"/>
    <property type="project" value="UniProtKB-SubCell"/>
</dbReference>
<dbReference type="GO" id="GO:0016020">
    <property type="term" value="C:membrane"/>
    <property type="evidence" value="ECO:0000318"/>
    <property type="project" value="GO_Central"/>
</dbReference>
<dbReference type="GO" id="GO:0044233">
    <property type="term" value="C:mitochondria-associated endoplasmic reticulum membrane contact site"/>
    <property type="evidence" value="ECO:0000318"/>
    <property type="project" value="GO_Central"/>
</dbReference>
<dbReference type="GO" id="GO:0071617">
    <property type="term" value="F:lysophospholipid acyltransferase activity"/>
    <property type="evidence" value="ECO:0000318"/>
    <property type="project" value="GO_Central"/>
</dbReference>
<dbReference type="GO" id="GO:0008374">
    <property type="term" value="F:O-acyltransferase activity"/>
    <property type="evidence" value="ECO:0000250"/>
    <property type="project" value="UniProtKB"/>
</dbReference>
<dbReference type="GO" id="GO:0030258">
    <property type="term" value="P:lipid modification"/>
    <property type="evidence" value="ECO:0000318"/>
    <property type="project" value="GO_Central"/>
</dbReference>
<dbReference type="GO" id="GO:0036151">
    <property type="term" value="P:phosphatidylcholine acyl-chain remodeling"/>
    <property type="evidence" value="ECO:0000250"/>
    <property type="project" value="UniProtKB"/>
</dbReference>
<dbReference type="GO" id="GO:0036149">
    <property type="term" value="P:phosphatidylinositol acyl-chain remodeling"/>
    <property type="evidence" value="ECO:0000250"/>
    <property type="project" value="UniProtKB"/>
</dbReference>
<dbReference type="GO" id="GO:0006661">
    <property type="term" value="P:phosphatidylinositol biosynthetic process"/>
    <property type="evidence" value="ECO:0000250"/>
    <property type="project" value="UniProtKB"/>
</dbReference>
<dbReference type="GO" id="GO:0090207">
    <property type="term" value="P:regulation of triglyceride metabolic process"/>
    <property type="evidence" value="ECO:0000250"/>
    <property type="project" value="UniProtKB"/>
</dbReference>
<dbReference type="InterPro" id="IPR049941">
    <property type="entry name" value="LPLAT_7/PORCN-like"/>
</dbReference>
<dbReference type="InterPro" id="IPR004299">
    <property type="entry name" value="MBOAT_fam"/>
</dbReference>
<dbReference type="PANTHER" id="PTHR13906:SF16">
    <property type="entry name" value="LYSOPHOSPHOLIPID ACYLTRANSFERASE 7"/>
    <property type="match status" value="1"/>
</dbReference>
<dbReference type="PANTHER" id="PTHR13906">
    <property type="entry name" value="PORCUPINE"/>
    <property type="match status" value="1"/>
</dbReference>
<dbReference type="Pfam" id="PF03062">
    <property type="entry name" value="MBOAT"/>
    <property type="match status" value="1"/>
</dbReference>
<gene>
    <name type="primary">mboat7</name>
    <name type="synonym">leng4</name>
    <name type="synonym">oact7</name>
</gene>
<proteinExistence type="evidence at transcript level"/>
<comment type="function">
    <text evidence="1">Acyltransferase which catalyzes the transfer of an acyl group from an acyl-CoA to a lysophosphatidylinositol (1-acylglycerophosphatidylinositol or LPI) leading to the production of a phosphatidylinositol (1,2-diacyl-sn-glycero-3-phosphoinositol or PI) and participates in the reacylation step of the phospholipid remodeling pathway also known as the Lands cycle. Prefers arachidonoyl-CoA as the acyl donor, thus contributing to the regulation of free levels arachidonic acid in cell.</text>
</comment>
<comment type="catalytic activity">
    <reaction evidence="2">
        <text>a 1-acyl-sn-glycero-3-phospho-(1D-myo-inositol) + (5Z,8Z,11Z,14Z)-eicosatetraenoyl-CoA = a 1-acyl-2-(5Z,8Z,11Z,14Z-eicosatetraenoyl)-sn-glycero-3-phospho-(1D-myo-inositol) + CoA</text>
        <dbReference type="Rhea" id="RHEA:37015"/>
        <dbReference type="ChEBI" id="CHEBI:57287"/>
        <dbReference type="ChEBI" id="CHEBI:57368"/>
        <dbReference type="ChEBI" id="CHEBI:64771"/>
        <dbReference type="ChEBI" id="CHEBI:75243"/>
    </reaction>
    <physiologicalReaction direction="left-to-right" evidence="2">
        <dbReference type="Rhea" id="RHEA:37016"/>
    </physiologicalReaction>
</comment>
<comment type="catalytic activity">
    <reaction evidence="2">
        <text>(5Z,8Z,11Z,14Z)-eicosatetraenoyl-CoA + 1-hexadecanoyl-sn-glycero-3-phosphocholine = 1-hexadecanoyl-2-(5Z,8Z,11Z,14Z-eicosatetraenoyl)-sn-glycero-3-phosphocholine + CoA</text>
        <dbReference type="Rhea" id="RHEA:35999"/>
        <dbReference type="ChEBI" id="CHEBI:57287"/>
        <dbReference type="ChEBI" id="CHEBI:57368"/>
        <dbReference type="ChEBI" id="CHEBI:72998"/>
        <dbReference type="ChEBI" id="CHEBI:73003"/>
    </reaction>
    <physiologicalReaction direction="left-to-right" evidence="2">
        <dbReference type="Rhea" id="RHEA:36000"/>
    </physiologicalReaction>
</comment>
<comment type="catalytic activity">
    <reaction evidence="1">
        <text>a 1-acyl-sn-glycero-3-phospho-(1D-myo-inositol) + an acyl-CoA = a 1,2-diacyl-sn-glycero-3-phospho-(1D-myo-inositol) + CoA</text>
        <dbReference type="Rhea" id="RHEA:33195"/>
        <dbReference type="ChEBI" id="CHEBI:57287"/>
        <dbReference type="ChEBI" id="CHEBI:57880"/>
        <dbReference type="ChEBI" id="CHEBI:58342"/>
        <dbReference type="ChEBI" id="CHEBI:64771"/>
    </reaction>
    <physiologicalReaction direction="left-to-right" evidence="1">
        <dbReference type="Rhea" id="RHEA:33196"/>
    </physiologicalReaction>
</comment>
<comment type="catalytic activity">
    <reaction evidence="1">
        <text>1-octadecanoyl-sn-glycero-3-phospho-(1D-myo-inositol) + (5Z,8Z,11Z,14Z)-eicosatetraenoyl-CoA = 1-octadecanoyl-2-(5Z,8Z,11Z,14Z-eicosatetraenoyl)-sn-glycero-3-phospho-(1D-myo-inositol) + CoA</text>
        <dbReference type="Rhea" id="RHEA:36835"/>
        <dbReference type="ChEBI" id="CHEBI:57287"/>
        <dbReference type="ChEBI" id="CHEBI:57368"/>
        <dbReference type="ChEBI" id="CHEBI:74243"/>
        <dbReference type="ChEBI" id="CHEBI:133606"/>
    </reaction>
    <physiologicalReaction direction="left-to-right" evidence="1">
        <dbReference type="Rhea" id="RHEA:36836"/>
    </physiologicalReaction>
</comment>
<comment type="pathway">
    <text evidence="2">Lipid metabolism; phospholipid metabolism.</text>
</comment>
<comment type="subcellular location">
    <subcellularLocation>
        <location evidence="2">Endoplasmic reticulum membrane</location>
        <topology evidence="2">Multi-pass membrane protein</topology>
    </subcellularLocation>
</comment>
<comment type="similarity">
    <text evidence="5">Belongs to the membrane-bound acyltransferase family.</text>
</comment>
<feature type="chain" id="PRO_0000317459" description="Membrane-bound acylglycerophosphatidylinositol O-acyltransferase mboat7">
    <location>
        <begin position="1"/>
        <end position="467"/>
    </location>
</feature>
<feature type="topological domain" description="Cytoplasmic" evidence="2">
    <location>
        <begin position="1"/>
        <end position="5"/>
    </location>
</feature>
<feature type="transmembrane region" description="Helical" evidence="2">
    <location>
        <begin position="6"/>
        <end position="22"/>
    </location>
</feature>
<feature type="topological domain" description="Lumenal" evidence="2">
    <location>
        <begin position="23"/>
        <end position="33"/>
    </location>
</feature>
<feature type="transmembrane region" description="Helical" evidence="2">
    <location>
        <begin position="34"/>
        <end position="57"/>
    </location>
</feature>
<feature type="topological domain" description="Cytoplasmic" evidence="2">
    <location>
        <begin position="58"/>
        <end position="73"/>
    </location>
</feature>
<feature type="transmembrane region" description="Helical" evidence="2">
    <location>
        <begin position="74"/>
        <end position="93"/>
    </location>
</feature>
<feature type="topological domain" description="Lumenal" evidence="2">
    <location>
        <begin position="94"/>
        <end position="193"/>
    </location>
</feature>
<feature type="transmembrane region" description="Helical" evidence="2">
    <location>
        <begin position="194"/>
        <end position="211"/>
    </location>
</feature>
<feature type="topological domain" description="Cytoplasmic" evidence="2">
    <location>
        <begin position="212"/>
        <end position="230"/>
    </location>
</feature>
<feature type="transmembrane region" description="Helical" evidence="2">
    <location>
        <begin position="231"/>
        <end position="260"/>
    </location>
</feature>
<feature type="topological domain" description="Lumenal" evidence="2">
    <location>
        <begin position="261"/>
        <end position="421"/>
    </location>
</feature>
<feature type="transmembrane region" description="Helical" evidence="2">
    <location>
        <begin position="422"/>
        <end position="442"/>
    </location>
</feature>
<feature type="topological domain" description="Cytoplasmic" evidence="2">
    <location>
        <begin position="443"/>
        <end position="467"/>
    </location>
</feature>
<feature type="region of interest" description="Disordered" evidence="4">
    <location>
        <begin position="447"/>
        <end position="467"/>
    </location>
</feature>
<feature type="compositionally biased region" description="Basic and acidic residues" evidence="4">
    <location>
        <begin position="451"/>
        <end position="467"/>
    </location>
</feature>
<feature type="glycosylation site" description="N-linked (GlcNAc...) asparagine" evidence="3">
    <location>
        <position position="316"/>
    </location>
</feature>
<accession>Q7SZQ0</accession>
<evidence type="ECO:0000250" key="1">
    <source>
        <dbReference type="UniProtKB" id="Q8CHK3"/>
    </source>
</evidence>
<evidence type="ECO:0000250" key="2">
    <source>
        <dbReference type="UniProtKB" id="Q96N66"/>
    </source>
</evidence>
<evidence type="ECO:0000255" key="3"/>
<evidence type="ECO:0000256" key="4">
    <source>
        <dbReference type="SAM" id="MobiDB-lite"/>
    </source>
</evidence>
<evidence type="ECO:0000305" key="5"/>
<name>MBOA7_DANRE</name>
<sequence>MSPDELVYLGILAATIPVGFLFRYLSPPVKQGAALLLGLIISIATCGIHTLHSLCTVLGTWIIIKINWRSAPALSLAWTFLYLLFFRLVTWFGLPQPTPFANAIQLLLTLKMVSLANEVQSYHLERKKEVSTFTKSPVVAGLSHEPSLYDIISYSYCYVGIMTGPFFRYQTYADWLQQSSPLSLPGKEPCLQRLKMVPVYGLLFIAVNSVFPLSYVRTEDFLEHNYFYRFFYMVAIFFVFRMRFYSAWCGAEAGCISAGLGCYPQGALSKPGGGPTVKYSPDPETAVEYDFKTIQNIDCYNTDFCVKVRHGMRYWNMTVQWWLHHYIYPNAPFRAYALRAGWTMLISAYWHGLHAGYYLSFLTIPLCIAAETAMEASVRARLGPAGQNIFDWIHWFLKMRAYDYMCMGFVLLKASDTISYWSSIYFVIHIIAIVCIAVGQFMKGGRKREKRERGEGEKEDAVREKAE</sequence>
<protein>
    <recommendedName>
        <fullName evidence="2">Membrane-bound acylglycerophosphatidylinositol O-acyltransferase mboat7</fullName>
        <ecNumber>2.3.1.-</ecNumber>
    </recommendedName>
    <alternativeName>
        <fullName>Leukocyte receptor cluster member 4</fullName>
    </alternativeName>
    <alternativeName>
        <fullName>Lysophospholipid acyltransferase 7</fullName>
        <shortName>LPLAT 7</shortName>
    </alternativeName>
    <alternativeName>
        <fullName>Membrane-bound O-acyltransferase domain-containing protein 7</fullName>
        <shortName>O-acyltransferase domain-containing protein 7</shortName>
    </alternativeName>
</protein>
<keyword id="KW-0012">Acyltransferase</keyword>
<keyword id="KW-0256">Endoplasmic reticulum</keyword>
<keyword id="KW-0325">Glycoprotein</keyword>
<keyword id="KW-0444">Lipid biosynthesis</keyword>
<keyword id="KW-0443">Lipid metabolism</keyword>
<keyword id="KW-0472">Membrane</keyword>
<keyword id="KW-0594">Phospholipid biosynthesis</keyword>
<keyword id="KW-1208">Phospholipid metabolism</keyword>
<keyword id="KW-1185">Reference proteome</keyword>
<keyword id="KW-0808">Transferase</keyword>
<keyword id="KW-0812">Transmembrane</keyword>
<keyword id="KW-1133">Transmembrane helix</keyword>
<reference key="1">
    <citation type="submission" date="2003-08" db="EMBL/GenBank/DDBJ databases">
        <authorList>
            <consortium name="NIH - Zebrafish Gene Collection (ZGC) project"/>
        </authorList>
    </citation>
    <scope>NUCLEOTIDE SEQUENCE [LARGE SCALE MRNA]</scope>
    <source>
        <tissue>Kidney</tissue>
    </source>
</reference>
<organism>
    <name type="scientific">Danio rerio</name>
    <name type="common">Zebrafish</name>
    <name type="synonym">Brachydanio rerio</name>
    <dbReference type="NCBI Taxonomy" id="7955"/>
    <lineage>
        <taxon>Eukaryota</taxon>
        <taxon>Metazoa</taxon>
        <taxon>Chordata</taxon>
        <taxon>Craniata</taxon>
        <taxon>Vertebrata</taxon>
        <taxon>Euteleostomi</taxon>
        <taxon>Actinopterygii</taxon>
        <taxon>Neopterygii</taxon>
        <taxon>Teleostei</taxon>
        <taxon>Ostariophysi</taxon>
        <taxon>Cypriniformes</taxon>
        <taxon>Danionidae</taxon>
        <taxon>Danioninae</taxon>
        <taxon>Danio</taxon>
    </lineage>
</organism>